<dbReference type="EMBL" id="CP000736">
    <property type="protein sequence ID" value="ABR53139.1"/>
    <property type="molecule type" value="Genomic_DNA"/>
</dbReference>
<dbReference type="SMR" id="A6U3X1"/>
<dbReference type="KEGG" id="sah:SaurJH1_2314"/>
<dbReference type="HOGENOM" id="CLU_144911_0_1_9"/>
<dbReference type="GO" id="GO:0005737">
    <property type="term" value="C:cytoplasm"/>
    <property type="evidence" value="ECO:0007669"/>
    <property type="project" value="UniProtKB-ARBA"/>
</dbReference>
<dbReference type="GO" id="GO:0015935">
    <property type="term" value="C:small ribosomal subunit"/>
    <property type="evidence" value="ECO:0007669"/>
    <property type="project" value="InterPro"/>
</dbReference>
<dbReference type="GO" id="GO:0019843">
    <property type="term" value="F:rRNA binding"/>
    <property type="evidence" value="ECO:0007669"/>
    <property type="project" value="UniProtKB-UniRule"/>
</dbReference>
<dbReference type="GO" id="GO:0003735">
    <property type="term" value="F:structural constituent of ribosome"/>
    <property type="evidence" value="ECO:0007669"/>
    <property type="project" value="InterPro"/>
</dbReference>
<dbReference type="GO" id="GO:0000028">
    <property type="term" value="P:ribosomal small subunit assembly"/>
    <property type="evidence" value="ECO:0007669"/>
    <property type="project" value="TreeGrafter"/>
</dbReference>
<dbReference type="GO" id="GO:0006412">
    <property type="term" value="P:translation"/>
    <property type="evidence" value="ECO:0007669"/>
    <property type="project" value="UniProtKB-UniRule"/>
</dbReference>
<dbReference type="FunFam" id="3.30.860.10:FF:000001">
    <property type="entry name" value="30S ribosomal protein S19"/>
    <property type="match status" value="1"/>
</dbReference>
<dbReference type="Gene3D" id="3.30.860.10">
    <property type="entry name" value="30s Ribosomal Protein S19, Chain A"/>
    <property type="match status" value="1"/>
</dbReference>
<dbReference type="HAMAP" id="MF_00531">
    <property type="entry name" value="Ribosomal_uS19"/>
    <property type="match status" value="1"/>
</dbReference>
<dbReference type="InterPro" id="IPR002222">
    <property type="entry name" value="Ribosomal_uS19"/>
</dbReference>
<dbReference type="InterPro" id="IPR005732">
    <property type="entry name" value="Ribosomal_uS19_bac-type"/>
</dbReference>
<dbReference type="InterPro" id="IPR020934">
    <property type="entry name" value="Ribosomal_uS19_CS"/>
</dbReference>
<dbReference type="InterPro" id="IPR023575">
    <property type="entry name" value="Ribosomal_uS19_SF"/>
</dbReference>
<dbReference type="NCBIfam" id="TIGR01050">
    <property type="entry name" value="rpsS_bact"/>
    <property type="match status" value="1"/>
</dbReference>
<dbReference type="PANTHER" id="PTHR11880">
    <property type="entry name" value="RIBOSOMAL PROTEIN S19P FAMILY MEMBER"/>
    <property type="match status" value="1"/>
</dbReference>
<dbReference type="PANTHER" id="PTHR11880:SF8">
    <property type="entry name" value="SMALL RIBOSOMAL SUBUNIT PROTEIN US19M"/>
    <property type="match status" value="1"/>
</dbReference>
<dbReference type="Pfam" id="PF00203">
    <property type="entry name" value="Ribosomal_S19"/>
    <property type="match status" value="1"/>
</dbReference>
<dbReference type="PIRSF" id="PIRSF002144">
    <property type="entry name" value="Ribosomal_S19"/>
    <property type="match status" value="1"/>
</dbReference>
<dbReference type="PRINTS" id="PR00975">
    <property type="entry name" value="RIBOSOMALS19"/>
</dbReference>
<dbReference type="SUPFAM" id="SSF54570">
    <property type="entry name" value="Ribosomal protein S19"/>
    <property type="match status" value="1"/>
</dbReference>
<dbReference type="PROSITE" id="PS00323">
    <property type="entry name" value="RIBOSOMAL_S19"/>
    <property type="match status" value="1"/>
</dbReference>
<sequence length="92" mass="10615">MARSIKKGPFVDEHLMKKVEAQEGSEKKQVIKTWSRRSTIFPNFIGHTFAVYDGRKHVPVYVTEDMVGHKLGEFAPTRTFKGHVADDKKTRR</sequence>
<reference key="1">
    <citation type="submission" date="2007-06" db="EMBL/GenBank/DDBJ databases">
        <title>Complete sequence of chromosome of Staphylococcus aureus subsp. aureus JH1.</title>
        <authorList>
            <consortium name="US DOE Joint Genome Institute"/>
            <person name="Copeland A."/>
            <person name="Lucas S."/>
            <person name="Lapidus A."/>
            <person name="Barry K."/>
            <person name="Detter J.C."/>
            <person name="Glavina del Rio T."/>
            <person name="Hammon N."/>
            <person name="Israni S."/>
            <person name="Dalin E."/>
            <person name="Tice H."/>
            <person name="Pitluck S."/>
            <person name="Chain P."/>
            <person name="Malfatti S."/>
            <person name="Shin M."/>
            <person name="Vergez L."/>
            <person name="Schmutz J."/>
            <person name="Larimer F."/>
            <person name="Land M."/>
            <person name="Hauser L."/>
            <person name="Kyrpides N."/>
            <person name="Ivanova N."/>
            <person name="Tomasz A."/>
            <person name="Richardson P."/>
        </authorList>
    </citation>
    <scope>NUCLEOTIDE SEQUENCE [LARGE SCALE GENOMIC DNA]</scope>
    <source>
        <strain>JH1</strain>
    </source>
</reference>
<accession>A6U3X1</accession>
<comment type="function">
    <text evidence="1">Protein S19 forms a complex with S13 that binds strongly to the 16S ribosomal RNA.</text>
</comment>
<comment type="similarity">
    <text evidence="1">Belongs to the universal ribosomal protein uS19 family.</text>
</comment>
<keyword id="KW-0687">Ribonucleoprotein</keyword>
<keyword id="KW-0689">Ribosomal protein</keyword>
<keyword id="KW-0694">RNA-binding</keyword>
<keyword id="KW-0699">rRNA-binding</keyword>
<name>RS19_STAA2</name>
<protein>
    <recommendedName>
        <fullName evidence="1">Small ribosomal subunit protein uS19</fullName>
    </recommendedName>
    <alternativeName>
        <fullName evidence="2">30S ribosomal protein S19</fullName>
    </alternativeName>
</protein>
<evidence type="ECO:0000255" key="1">
    <source>
        <dbReference type="HAMAP-Rule" id="MF_00531"/>
    </source>
</evidence>
<evidence type="ECO:0000305" key="2"/>
<organism>
    <name type="scientific">Staphylococcus aureus (strain JH1)</name>
    <dbReference type="NCBI Taxonomy" id="359787"/>
    <lineage>
        <taxon>Bacteria</taxon>
        <taxon>Bacillati</taxon>
        <taxon>Bacillota</taxon>
        <taxon>Bacilli</taxon>
        <taxon>Bacillales</taxon>
        <taxon>Staphylococcaceae</taxon>
        <taxon>Staphylococcus</taxon>
    </lineage>
</organism>
<proteinExistence type="inferred from homology"/>
<feature type="chain" id="PRO_1000081796" description="Small ribosomal subunit protein uS19">
    <location>
        <begin position="1"/>
        <end position="92"/>
    </location>
</feature>
<gene>
    <name evidence="1" type="primary">rpsS</name>
    <name type="ordered locus">SaurJH1_2314</name>
</gene>